<dbReference type="EC" id="2.3.2.33" evidence="1"/>
<dbReference type="EMBL" id="AC114410">
    <property type="status" value="NOT_ANNOTATED_CDS"/>
    <property type="molecule type" value="Genomic_DNA"/>
</dbReference>
<dbReference type="EMBL" id="AC114585">
    <property type="status" value="NOT_ANNOTATED_CDS"/>
    <property type="molecule type" value="Genomic_DNA"/>
</dbReference>
<dbReference type="EMBL" id="CT025554">
    <property type="status" value="NOT_ANNOTATED_CDS"/>
    <property type="molecule type" value="Genomic_DNA"/>
</dbReference>
<dbReference type="EMBL" id="AY325887">
    <property type="protein sequence ID" value="AAP88591.1"/>
    <property type="molecule type" value="mRNA"/>
</dbReference>
<dbReference type="EMBL" id="BC059257">
    <property type="protein sequence ID" value="AAH59257.1"/>
    <property type="molecule type" value="mRNA"/>
</dbReference>
<dbReference type="CCDS" id="CCDS49559.1">
    <molecule id="Q7TPH6-2"/>
</dbReference>
<dbReference type="RefSeq" id="NP_997098.2">
    <molecule id="Q7TPH6-2"/>
    <property type="nucleotide sequence ID" value="NM_207215.2"/>
</dbReference>
<dbReference type="PDB" id="3GBW">
    <property type="method" value="X-ray"/>
    <property type="resolution" value="1.32 A"/>
    <property type="chains" value="A=1229-1390"/>
</dbReference>
<dbReference type="PDB" id="3HWJ">
    <property type="method" value="X-ray"/>
    <property type="resolution" value="2.25 A"/>
    <property type="chains" value="A/B=1723-1883"/>
</dbReference>
<dbReference type="PDBsum" id="3GBW"/>
<dbReference type="PDBsum" id="3HWJ"/>
<dbReference type="SMR" id="Q7TPH6"/>
<dbReference type="BioGRID" id="222897">
    <property type="interactions" value="155"/>
</dbReference>
<dbReference type="FunCoup" id="Q7TPH6">
    <property type="interactions" value="5081"/>
</dbReference>
<dbReference type="IntAct" id="Q7TPH6">
    <property type="interactions" value="142"/>
</dbReference>
<dbReference type="MINT" id="Q7TPH6"/>
<dbReference type="STRING" id="10090.ENSMUSP00000124710"/>
<dbReference type="GlyGen" id="Q7TPH6">
    <property type="glycosylation" value="4 sites, 1 N-linked glycan (1 site), 1 O-linked glycan (1 site)"/>
</dbReference>
<dbReference type="iPTMnet" id="Q7TPH6"/>
<dbReference type="PhosphoSitePlus" id="Q7TPH6"/>
<dbReference type="SwissPalm" id="Q7TPH6"/>
<dbReference type="jPOST" id="Q7TPH6"/>
<dbReference type="PaxDb" id="10090-ENSMUSP00000124710"/>
<dbReference type="ProteomicsDB" id="287559">
    <molecule id="Q7TPH6-1"/>
</dbReference>
<dbReference type="ProteomicsDB" id="287560">
    <molecule id="Q7TPH6-2"/>
</dbReference>
<dbReference type="ProteomicsDB" id="355672"/>
<dbReference type="Pumba" id="Q7TPH6"/>
<dbReference type="Antibodypedia" id="24520">
    <property type="antibodies" value="49 antibodies from 11 providers"/>
</dbReference>
<dbReference type="DNASU" id="105689"/>
<dbReference type="Ensembl" id="ENSMUST00000159855.8">
    <molecule id="Q7TPH6-2"/>
    <property type="protein sequence ID" value="ENSMUSP00000124710.2"/>
    <property type="gene ID" value="ENSMUSG00000033004.17"/>
</dbReference>
<dbReference type="GeneID" id="105689"/>
<dbReference type="KEGG" id="mmu:105689"/>
<dbReference type="AGR" id="MGI:2179432"/>
<dbReference type="CTD" id="23077"/>
<dbReference type="MGI" id="MGI:2179432">
    <property type="gene designation" value="Mycbp2"/>
</dbReference>
<dbReference type="VEuPathDB" id="HostDB:ENSMUSG00000033004"/>
<dbReference type="eggNOG" id="KOG1428">
    <property type="taxonomic scope" value="Eukaryota"/>
</dbReference>
<dbReference type="GeneTree" id="ENSGT00940000155756"/>
<dbReference type="InParanoid" id="Q7TPH6"/>
<dbReference type="OMA" id="MAHPGCG"/>
<dbReference type="PhylomeDB" id="Q7TPH6"/>
<dbReference type="TreeFam" id="TF313151"/>
<dbReference type="BRENDA" id="2.3.2.33">
    <property type="organism ID" value="3474"/>
</dbReference>
<dbReference type="UniPathway" id="UPA00143"/>
<dbReference type="BioGRID-ORCS" id="105689">
    <property type="hits" value="7 hits in 76 CRISPR screens"/>
</dbReference>
<dbReference type="CD-CODE" id="CE726F99">
    <property type="entry name" value="Postsynaptic density"/>
</dbReference>
<dbReference type="ChiTaRS" id="Mycbp2">
    <property type="organism name" value="mouse"/>
</dbReference>
<dbReference type="EvolutionaryTrace" id="Q7TPH6"/>
<dbReference type="PRO" id="PR:Q7TPH6"/>
<dbReference type="Proteomes" id="UP000000589">
    <property type="component" value="Chromosome 14"/>
</dbReference>
<dbReference type="RNAct" id="Q7TPH6">
    <property type="molecule type" value="protein"/>
</dbReference>
<dbReference type="Bgee" id="ENSMUSG00000033004">
    <property type="expression patterns" value="Expressed in ventromedial nucleus of hypothalamus and 268 other cell types or tissues"/>
</dbReference>
<dbReference type="ExpressionAtlas" id="Q7TPH6">
    <property type="expression patterns" value="baseline and differential"/>
</dbReference>
<dbReference type="GO" id="GO:0030424">
    <property type="term" value="C:axon"/>
    <property type="evidence" value="ECO:0000314"/>
    <property type="project" value="MGI"/>
</dbReference>
<dbReference type="GO" id="GO:0005829">
    <property type="term" value="C:cytosol"/>
    <property type="evidence" value="ECO:0007669"/>
    <property type="project" value="Ensembl"/>
</dbReference>
<dbReference type="GO" id="GO:0015630">
    <property type="term" value="C:microtubule cytoskeleton"/>
    <property type="evidence" value="ECO:0000314"/>
    <property type="project" value="MGI"/>
</dbReference>
<dbReference type="GO" id="GO:0005654">
    <property type="term" value="C:nucleoplasm"/>
    <property type="evidence" value="ECO:0007669"/>
    <property type="project" value="Ensembl"/>
</dbReference>
<dbReference type="GO" id="GO:0005634">
    <property type="term" value="C:nucleus"/>
    <property type="evidence" value="ECO:0000250"/>
    <property type="project" value="UniProtKB"/>
</dbReference>
<dbReference type="GO" id="GO:0005085">
    <property type="term" value="F:guanyl-nucleotide exchange factor activity"/>
    <property type="evidence" value="ECO:0000250"/>
    <property type="project" value="UniProtKB"/>
</dbReference>
<dbReference type="GO" id="GO:0042802">
    <property type="term" value="F:identical protein binding"/>
    <property type="evidence" value="ECO:0000353"/>
    <property type="project" value="MGI"/>
</dbReference>
<dbReference type="GO" id="GO:0031267">
    <property type="term" value="F:small GTPase binding"/>
    <property type="evidence" value="ECO:0000250"/>
    <property type="project" value="UniProtKB"/>
</dbReference>
<dbReference type="GO" id="GO:0061630">
    <property type="term" value="F:ubiquitin protein ligase activity"/>
    <property type="evidence" value="ECO:0000250"/>
    <property type="project" value="UniProtKB"/>
</dbReference>
<dbReference type="GO" id="GO:0008270">
    <property type="term" value="F:zinc ion binding"/>
    <property type="evidence" value="ECO:0007669"/>
    <property type="project" value="UniProtKB-KW"/>
</dbReference>
<dbReference type="GO" id="GO:0021785">
    <property type="term" value="P:branchiomotor neuron axon guidance"/>
    <property type="evidence" value="ECO:0000315"/>
    <property type="project" value="MGI"/>
</dbReference>
<dbReference type="GO" id="GO:0048667">
    <property type="term" value="P:cell morphogenesis involved in neuron differentiation"/>
    <property type="evidence" value="ECO:0000315"/>
    <property type="project" value="MGI"/>
</dbReference>
<dbReference type="GO" id="GO:0021952">
    <property type="term" value="P:central nervous system projection neuron axonogenesis"/>
    <property type="evidence" value="ECO:0000315"/>
    <property type="project" value="UniProtKB"/>
</dbReference>
<dbReference type="GO" id="GO:0032922">
    <property type="term" value="P:circadian regulation of gene expression"/>
    <property type="evidence" value="ECO:0000315"/>
    <property type="project" value="UniProtKB"/>
</dbReference>
<dbReference type="GO" id="GO:0008045">
    <property type="term" value="P:motor neuron axon guidance"/>
    <property type="evidence" value="ECO:0000315"/>
    <property type="project" value="MGI"/>
</dbReference>
<dbReference type="GO" id="GO:0042177">
    <property type="term" value="P:negative regulation of protein catabolic process"/>
    <property type="evidence" value="ECO:0000314"/>
    <property type="project" value="MGI"/>
</dbReference>
<dbReference type="GO" id="GO:0050905">
    <property type="term" value="P:neuromuscular process"/>
    <property type="evidence" value="ECO:0000315"/>
    <property type="project" value="UniProtKB"/>
</dbReference>
<dbReference type="GO" id="GO:0031398">
    <property type="term" value="P:positive regulation of protein ubiquitination"/>
    <property type="evidence" value="ECO:0000314"/>
    <property type="project" value="UniProtKB"/>
</dbReference>
<dbReference type="GO" id="GO:0070936">
    <property type="term" value="P:protein K48-linked ubiquitination"/>
    <property type="evidence" value="ECO:0007669"/>
    <property type="project" value="Ensembl"/>
</dbReference>
<dbReference type="GO" id="GO:0016567">
    <property type="term" value="P:protein ubiquitination"/>
    <property type="evidence" value="ECO:0000250"/>
    <property type="project" value="UniProtKB"/>
</dbReference>
<dbReference type="GO" id="GO:1902667">
    <property type="term" value="P:regulation of axon guidance"/>
    <property type="evidence" value="ECO:0000315"/>
    <property type="project" value="UniProtKB"/>
</dbReference>
<dbReference type="GO" id="GO:0051493">
    <property type="term" value="P:regulation of cytoskeleton organization"/>
    <property type="evidence" value="ECO:0000315"/>
    <property type="project" value="MGI"/>
</dbReference>
<dbReference type="GO" id="GO:0032880">
    <property type="term" value="P:regulation of protein localization"/>
    <property type="evidence" value="ECO:0000315"/>
    <property type="project" value="MGI"/>
</dbReference>
<dbReference type="CDD" id="cd19799">
    <property type="entry name" value="Bbox2_MYCBP2"/>
    <property type="match status" value="1"/>
</dbReference>
<dbReference type="CDD" id="cd16463">
    <property type="entry name" value="RING-H2_PHR"/>
    <property type="match status" value="1"/>
</dbReference>
<dbReference type="FunFam" id="2.130.10.30:FF:000002">
    <property type="entry name" value="E3 ubiquitin-protein ligase MYCBP2 isoform X1"/>
    <property type="match status" value="1"/>
</dbReference>
<dbReference type="FunFam" id="2.60.120.260:FF:000011">
    <property type="entry name" value="E3 ubiquitin-protein ligase MYCBP2 isoform X1"/>
    <property type="match status" value="1"/>
</dbReference>
<dbReference type="FunFam" id="2.60.120.820:FF:000002">
    <property type="entry name" value="E3 ubiquitin-protein ligase MYCBP2 isoform X1"/>
    <property type="match status" value="1"/>
</dbReference>
<dbReference type="FunFam" id="3.30.40.10:FF:000078">
    <property type="entry name" value="E3 ubiquitin-protein ligase MYCBP2 isoform X1"/>
    <property type="match status" value="1"/>
</dbReference>
<dbReference type="FunFam" id="2.130.10.30:FF:000016">
    <property type="entry name" value="E3 ubiquitin-protein ligase MYCBP2 isoform X2"/>
    <property type="match status" value="1"/>
</dbReference>
<dbReference type="FunFam" id="2.60.120.820:FF:000003">
    <property type="entry name" value="E3 ubiquitin-protein ligase MYCBP2 isoform X2"/>
    <property type="match status" value="1"/>
</dbReference>
<dbReference type="Gene3D" id="2.60.120.260">
    <property type="entry name" value="Galactose-binding domain-like"/>
    <property type="match status" value="1"/>
</dbReference>
<dbReference type="Gene3D" id="2.60.40.10">
    <property type="entry name" value="Immunoglobulins"/>
    <property type="match status" value="1"/>
</dbReference>
<dbReference type="Gene3D" id="2.60.120.820">
    <property type="entry name" value="PHR domain"/>
    <property type="match status" value="2"/>
</dbReference>
<dbReference type="Gene3D" id="2.130.10.30">
    <property type="entry name" value="Regulator of chromosome condensation 1/beta-lactamase-inhibitor protein II"/>
    <property type="match status" value="2"/>
</dbReference>
<dbReference type="Gene3D" id="3.30.40.10">
    <property type="entry name" value="Zinc/RING finger domain, C3HC4 (zinc finger)"/>
    <property type="match status" value="1"/>
</dbReference>
<dbReference type="InterPro" id="IPR004939">
    <property type="entry name" value="APC_su10/DOC_dom"/>
</dbReference>
<dbReference type="InterPro" id="IPR017868">
    <property type="entry name" value="Filamin/ABP280_repeat-like"/>
</dbReference>
<dbReference type="InterPro" id="IPR008979">
    <property type="entry name" value="Galactose-bd-like_sf"/>
</dbReference>
<dbReference type="InterPro" id="IPR013783">
    <property type="entry name" value="Ig-like_fold"/>
</dbReference>
<dbReference type="InterPro" id="IPR014756">
    <property type="entry name" value="Ig_E-set"/>
</dbReference>
<dbReference type="InterPro" id="IPR012983">
    <property type="entry name" value="PHR"/>
</dbReference>
<dbReference type="InterPro" id="IPR038648">
    <property type="entry name" value="PHR_sf"/>
</dbReference>
<dbReference type="InterPro" id="IPR009091">
    <property type="entry name" value="RCC1/BLIP-II"/>
</dbReference>
<dbReference type="InterPro" id="IPR000408">
    <property type="entry name" value="Reg_chr_condens"/>
</dbReference>
<dbReference type="InterPro" id="IPR001841">
    <property type="entry name" value="Znf_RING"/>
</dbReference>
<dbReference type="InterPro" id="IPR013083">
    <property type="entry name" value="Znf_RING/FYVE/PHD"/>
</dbReference>
<dbReference type="PANTHER" id="PTHR45943">
    <property type="entry name" value="E3 UBIQUITIN-PROTEIN LIGASE MYCBP2"/>
    <property type="match status" value="1"/>
</dbReference>
<dbReference type="PANTHER" id="PTHR45943:SF1">
    <property type="entry name" value="E3 UBIQUITIN-PROTEIN LIGASE MYCBP2"/>
    <property type="match status" value="1"/>
</dbReference>
<dbReference type="Pfam" id="PF03256">
    <property type="entry name" value="ANAPC10"/>
    <property type="match status" value="1"/>
</dbReference>
<dbReference type="Pfam" id="PF08005">
    <property type="entry name" value="PHR"/>
    <property type="match status" value="2"/>
</dbReference>
<dbReference type="Pfam" id="PF00415">
    <property type="entry name" value="RCC1"/>
    <property type="match status" value="1"/>
</dbReference>
<dbReference type="Pfam" id="PF13540">
    <property type="entry name" value="RCC1_2"/>
    <property type="match status" value="1"/>
</dbReference>
<dbReference type="PRINTS" id="PR00633">
    <property type="entry name" value="RCCNDNSATION"/>
</dbReference>
<dbReference type="SMART" id="SM01337">
    <property type="entry name" value="APC10"/>
    <property type="match status" value="1"/>
</dbReference>
<dbReference type="SMART" id="SM00184">
    <property type="entry name" value="RING"/>
    <property type="match status" value="1"/>
</dbReference>
<dbReference type="SUPFAM" id="SSF81296">
    <property type="entry name" value="E set domains"/>
    <property type="match status" value="1"/>
</dbReference>
<dbReference type="SUPFAM" id="SSF49785">
    <property type="entry name" value="Galactose-binding domain-like"/>
    <property type="match status" value="1"/>
</dbReference>
<dbReference type="SUPFAM" id="SSF50985">
    <property type="entry name" value="RCC1/BLIP-II"/>
    <property type="match status" value="1"/>
</dbReference>
<dbReference type="SUPFAM" id="SSF57850">
    <property type="entry name" value="RING/U-box"/>
    <property type="match status" value="1"/>
</dbReference>
<dbReference type="PROSITE" id="PS51284">
    <property type="entry name" value="DOC"/>
    <property type="match status" value="1"/>
</dbReference>
<dbReference type="PROSITE" id="PS50194">
    <property type="entry name" value="FILAMIN_REPEAT"/>
    <property type="match status" value="1"/>
</dbReference>
<dbReference type="PROSITE" id="PS00626">
    <property type="entry name" value="RCC1_2"/>
    <property type="match status" value="2"/>
</dbReference>
<dbReference type="PROSITE" id="PS50012">
    <property type="entry name" value="RCC1_3"/>
    <property type="match status" value="3"/>
</dbReference>
<dbReference type="PROSITE" id="PS50089">
    <property type="entry name" value="ZF_RING_2"/>
    <property type="match status" value="1"/>
</dbReference>
<sequence length="4749" mass="521232">MMMCAATASPAAASSGPGGDGFFAAATISSSPAPGALFMPVPDGSVAAAGLGLGLPTTDSRGHYQLLLSGRALADRYRRIYTTALSDRDQAGSSTGHPASRNKKILNKKKLKRKQKSKSKVKTRSKSENVENTVIIPDIKLHSNPSAFNIYCNVRHCVLEWQKKETSLAAASKNSVQSGESDSDEEEESREPPIKLPKIIEVGLCEVFELIKETRFSHPSLCLRSLQALLNVLQGQQPEGLQSEPPEVLESLFQLLLEITVRSTGMNDSTGQSLTALSCACLFSLVASWGETGRTLQAISAILTNNGSHACQTIQVPTILNSLQRSVQAVLVGKIQVQDWFSNGIKKAALMHKWPLKEVSVDEDDQCLLQNDGFFLYLLCKDGLYKIGSGYSGTVRGHIYNSTSRIRNRKEKKSWLGYAQGYLLYRDLNNHSMTAIRISPETLEQDGTVLLPDCHTEGQNILFTDGEYINQIAASRDDGFVVRIFATSTEPVLQQELQLKLARKCLHACGISLFDLEKDLHIISTGFDEESAILGAGREFALMKTANGKIYYTGKYQSLGIKQGGPSAGKWVELPITKSPKIVHFSVGHDGSHALLVAEDGSVFFTGSASKGEDGESTKSRRQSKPYKPKKIIKMEGKIVVYTACNNGSSSVISKDGELYMFGKDAIYSDSSSLVSDLKGHFVTQVAMGKAHTCVLMKNGEVWTFGVNNKGQCGRDTGAMNQGGKGFGVENMATAMDEDLEEELDEKDEKSMMCPPGMHKWKLEQCMVCTVCGDCTGYGASCVSSGRPDRVPGGICGCGSGESGCAVCGCCKACARELDGQEARQRGILDAVKEMIPLDLLLAVPVPGVNIEEHLQLRQEEKRQRVIRRHRLEDGRGPLVFAGPIFMNHREQALARLRSHPAQLKHKRDKHKDGSGDRGEKDASKITTYPPGSVRFDCELRAVQVSCGFHHSVVLMENGDVYTFGYGQHGQLGHGDVNSRGCPTLVQALPGPSTQVTAGSNHTAVLLMDGQVFTFGSFSKGQLGRPILDIPYWNAKPAPMPNIGSKYGRKATWIGASGDQTFLRIDEALINSHVLATSEIFASKHIIGLVPASISEPPPFKCLLINKVDGSCKTFNDSEQEDLQGFGVCLDPVYDVLWRFRPSTRELWCYNAVVADARLPSATDMQSRCSILSPELALPTGSRALTTRSHAALHILGCLDTLAAMQDLKMGIASTEEETQAVMKVYSKEDYSVVNRFESHGGGWGYSAHSVEAIRFSADTDILLGGLGLFGGRGEYTAKIKLFELGPDGGDHETDGDLLAETDVLAYDCAAREKYAMMFDEPVLLQAGWWYVAWARVSGPSSDCGSHGQASITTDDGVIFQFKSSKKSNNGTDVNAGQIPQLLYRLPTSDGSTSKGKQQTSEPVHILKRSFARTVSVECFESLLSILHWSWTTLVLGVEELRGLKGFQFTATLLDLERLRFVGTCCLRLLRVYTCEIYPVSATGKAVVEETSKLAECIGKTRTLLRKILSEGVDHCMVKLDNDPQGYLSQPLRLLEAVLQECHNTFTACFHSFYPTPALQWACLCDLLNCLDQEANFKTSSSRLLAAVMSALCHTSVKLTSLFPIAYDGEVLLRSIVKQVSTENDSTLVHRFPLLVGHMEKLSQSEENISGMTSFREVLEKMLVIVVLPVRNSLRRESELFSSHLVSNTCGLLASIVSELTASALGSEVDGLNSLHSVKASANRFTKTSQGRSWNTGNGSPDAICFAVDKPGIVVVGFAVYGGGGIHEYELEVLVDDSEHAGDSTHSHRWTSLELVKGTYTTDDSPSDIAEIRLDKVVPLKENVKYAVRLRNYGSRTANGDGGMTTVQCPDGVTFTFSTCSLSSNGTNQTRGQIPQILYYRSEFDGDLQSQLLSKANEEDKNCSRALSVVSTVVRAAKDLLHRALAVDADDIPELLSSSSLFSMLLPLIIAYIGPVAAAIPKVAVEVFGLVQQLLPSVAILNQKYAPPAFNPNQSTDSTTGNQPEQGLSACTTSNHYAVIESEHPYKPACVMHYKVTFPECVRWMTIEFDPQCGTAQSEDVIRLLIPVRTIQNSGYGAKLTSVHENLNSWVELKKYSGSSGWPTMVLVLPGNEALFSLETASDYVKDDKASFYGFKCFAIGYEFSPGPDEGVIQLEKELANLGGVCAAALMKKDLALPVGNELEEDLEILEEAALQVCKTHSGILGKGLALSHSPTILEALEGNLPLQIQSNEQSFLDDFIACVPGSSGGRLARWLQPDSYADPQKTSLILNKDDIRCGWPTTITVQTKDQYGDVVHVPNMKVEVKAVPVSQKKTSLQQDQGKKCQRIPGSPSAAASSADMTFGGLASPKLDVSYEPMIVKEARYIAITMMKVYENYSFEELRFASPTPKRPSENMLIRVNNDGTYCANWTPGAIGLYTVHVTIDGIEIDAGLEVKVKDPPKGMIPPGTQLVKPKADPQPNKIRKFVAKDSAGLRIRSHPSLQSEQIGIVRVNGTITFIDEIHNDDGVWLRLNEETIKKYVPNMNGYTEAWCLSFNQHLGKSLLVPVDNIFNASQGVRDLDVFSWTSKAFFPQEPKTNTDDFFKDMNSCGPQEATMQERDHPFLRGGPGMYKVVKTGPSGHNIRSCPNLRGIPIGMLVLGNKVKAVGEVTNSEGAWVQLDKNSMVEFCESDEGEAWSLARDRGGNQYLRHEDEQVLLDQNSQPPPPSPFSVQAFNKGASCSAQGFDYGLGNNKGDQLSAILNSIQSRPNLPAPSIFDQAAKPPSSLVHSPFVFGQPLSFQQRQLQSDRGTISTSSRPVSTSGKSELPSKHSRSVKPDGHVSRTPADQKKPRGTEGLSASESLMLKSDAAKLRSDSHSRSLSPNHNTLQTLKSDGRTSSGFRAESPGPGSRSSSPKPKPLPTPRSSPSGASSPRSSSPQDKNLPQKSTAPAKTKLDPPRERSKSDSYTLDPDTLRKKKMPLTEPLRGRSTSPKPKPVPKDPKDSPGSENRAPSPHVVQENLHSEVVEVCTSSTLKTNGVTDSTCDDSGDLKSVDEGSNKVHFSIGKAPLKDEQEMRASPKISRKCANRHTRPKKEKSNFLFKGDGTKSLEPAKQAMSPSVAECARAVFASFLWHEGIVHDAMACSSFLKFNPDLSKEHAPIRSSLNSQPPTEEKEIKLKNRHSLEISSALNMFNIAPHGPDISKMGSINKNKVLSMLKEPPLHEKCEDGKSEATFEMSMHHTMKSKSPLPLTLQHLVAFWEDISLATIKAASQNMIFPSPGSCAVLKKKECEKENKKTKKEKKKKEKTEIRPRGNLFGEMAQLAVGGPEKDTICELCGESHPYPVTYHMRQAHPGCGRYAGGQGYNSIGHFCGGWAGNCGDGGMGGSTWYLVCDRCREKYLREKQAAAREKVKQSRRKPMQVKTPRALPTMEAHQVIKANALFLLSLSSAAEPSILCYHPAKPFQSQLPIVKEGVSEDLPVKMPCLYLQTLARHHHENFVGYQDDNLFQDEMRYLRSTSVPAPYISVTPDASPNVFEEPESNMKSMPPSLETSPITDTDLAKRTVFQRSYSVVASEYDKQHSILPARVKAIPRRRVNSGDTVGSSLLRHPSPELSRLISAHSSLSKGERNFQWPVLAFVIQHHDLEGLEIAMKQALRKSACRVFAMEAFNWLLCNVIQTTSLHDILWHFVAALTPSPVEAEEDEDEDNKSNKENAEQEKDTRVCEHPLSDIVIAGEAAHPLPHTFHRLLQTISDLMMSLPSGSSLQQMALRCWSLKFKQSDHQFLHQSNVFHHINNILSKSDDGDSEESFSISVQSGFEAMSQELCIVMCLKDLTSIVDIKTSSRPAMIGSLTDGSTETFWESGDEDKNKTKNITINCVKGINARYVSVHVDNSRDLGNKVTSMTFLTGKAVEELCRIKQVDLDSRHIGWVTSELPGGDNQIIKIELKGPENTLRVRQVKVLGWKDGESTKIAGQISASVAQQRSCEAETLRVFRLITSQVFGKLISGDAEPTPEQEEKALLSSPEGEEKVYNATSDADLKEHMVGIIFSRSKLTNLQKQVCAHIVQAIRMEATRVREEWEHAISSKENANSQPSDEDASSDAYCFELLSMVLALSGSNVGRQYLAQQLTLLQDLFSLLHTASPRVQRQVTSLLRRVLPEVTPNRLASIIGVKSLPPADISDIIHSTEKGDWNKLGILDMFLGCIAKALTVQLKAKGTTITGTAGTTVGKGVTTVTLPMIFNSSYLRRGESHWWMKGSTPTQISEIIIRLIKDMAAGHLSEAWSRVTKNAIAETIIALTKMEEEFRSPVRCIATTRLWLALASLCVLDQDHVDRLSSGRWMGKDGQQKQMPMCDNHDDGETAAIILCNICGNLCTDCDRFLHLHRRTKTHQRQVFKEEEEAIKVDLHEGCGRTKLFWLMALADSKTMKAMVEFREHTGKPTTSSSEACRFCGSRSGTELSAVGSVCSDADCQEYAKIACSKTHPCGHPCGGVRNEEHCLPCLHGCDKSATTLKQDADDMCMICFTEALSAAPAIQLDCSHVFHLQCCRRVLENRWLGPRITFGFISCPICKNKINHIVLKDLLDPIKELYEDVRRKALMRLEYEGLHKSEAITTPGVRFYNDAAGYAMNRYAYYVCYKCRKAYFGGEARCDAEAGQGDDYDPRELICGACSDVSRAQMCPKHGTDFLEYKCRYCCSVAVFFCFGTTHFCNACHDDFQRMTSIPKEELPHCPAGPKGKQLEGTECPLHVVHPPTGEEFALGCGVCRNAHTF</sequence>
<keyword id="KW-0002">3D-structure</keyword>
<keyword id="KW-0025">Alternative splicing</keyword>
<keyword id="KW-0090">Biological rhythms</keyword>
<keyword id="KW-0966">Cell projection</keyword>
<keyword id="KW-0963">Cytoplasm</keyword>
<keyword id="KW-0206">Cytoskeleton</keyword>
<keyword id="KW-0903">Direct protein sequencing</keyword>
<keyword id="KW-1015">Disulfide bond</keyword>
<keyword id="KW-0344">Guanine-nucleotide releasing factor</keyword>
<keyword id="KW-0479">Metal-binding</keyword>
<keyword id="KW-0539">Nucleus</keyword>
<keyword id="KW-0597">Phosphoprotein</keyword>
<keyword id="KW-1185">Reference proteome</keyword>
<keyword id="KW-0677">Repeat</keyword>
<keyword id="KW-0808">Transferase</keyword>
<keyword id="KW-0832">Ubl conjugation</keyword>
<keyword id="KW-0833">Ubl conjugation pathway</keyword>
<keyword id="KW-0862">Zinc</keyword>
<keyword id="KW-0863">Zinc-finger</keyword>
<proteinExistence type="evidence at protein level"/>
<reference key="1">
    <citation type="journal article" date="2009" name="PLoS Biol.">
        <title>Lineage-specific biology revealed by a finished genome assembly of the mouse.</title>
        <authorList>
            <person name="Church D.M."/>
            <person name="Goodstadt L."/>
            <person name="Hillier L.W."/>
            <person name="Zody M.C."/>
            <person name="Goldstein S."/>
            <person name="She X."/>
            <person name="Bult C.J."/>
            <person name="Agarwala R."/>
            <person name="Cherry J.L."/>
            <person name="DiCuccio M."/>
            <person name="Hlavina W."/>
            <person name="Kapustin Y."/>
            <person name="Meric P."/>
            <person name="Maglott D."/>
            <person name="Birtle Z."/>
            <person name="Marques A.C."/>
            <person name="Graves T."/>
            <person name="Zhou S."/>
            <person name="Teague B."/>
            <person name="Potamousis K."/>
            <person name="Churas C."/>
            <person name="Place M."/>
            <person name="Herschleb J."/>
            <person name="Runnheim R."/>
            <person name="Forrest D."/>
            <person name="Amos-Landgraf J."/>
            <person name="Schwartz D.C."/>
            <person name="Cheng Z."/>
            <person name="Lindblad-Toh K."/>
            <person name="Eichler E.E."/>
            <person name="Ponting C.P."/>
        </authorList>
    </citation>
    <scope>NUCLEOTIDE SEQUENCE [LARGE SCALE GENOMIC DNA]</scope>
    <source>
        <strain>C57BL/6J</strain>
    </source>
</reference>
<reference key="2">
    <citation type="journal article" date="2004" name="Mol. Cell. Biol.">
        <title>Evidence for a conserved function in synapse formation reveals Phr1 as a candidate gene for respiratory failure in newborn mice.</title>
        <authorList>
            <person name="Burgess R.W."/>
            <person name="Peterson K.A."/>
            <person name="Johnson M.J."/>
            <person name="Roix J.J."/>
            <person name="Welsh I.C."/>
            <person name="O'Brien T.P."/>
        </authorList>
    </citation>
    <scope>NUCLEOTIDE SEQUENCE [MRNA] OF 24-4749 (ISOFORM 1)</scope>
    <scope>FUNCTION</scope>
    <scope>TISSUE SPECIFICITY</scope>
    <scope>DEVELOPMENTAL STAGE</scope>
    <scope>DISRUPTION PHENOTYPE</scope>
    <source>
        <strain evidence="25">C57BL/6J</strain>
        <tissue evidence="7">Embryo</tissue>
    </source>
</reference>
<reference key="3">
    <citation type="submission" date="2007-04" db="UniProtKB">
        <authorList>
            <person name="Lubec G."/>
            <person name="Kang S.U."/>
        </authorList>
    </citation>
    <scope>PROTEIN SEQUENCE OF 2365-2390 AND 2904-2913</scope>
    <scope>IDENTIFICATION BY MASS SPECTROMETRY</scope>
    <source>
        <strain>C57BL/6J</strain>
        <tissue>Brain</tissue>
    </source>
</reference>
<reference key="4">
    <citation type="journal article" date="2004" name="Genome Res.">
        <title>The status, quality, and expansion of the NIH full-length cDNA project: the Mammalian Gene Collection (MGC).</title>
        <authorList>
            <consortium name="The MGC Project Team"/>
        </authorList>
    </citation>
    <scope>NUCLEOTIDE SEQUENCE [LARGE SCALE MRNA] OF 3288-4749 (ISOFORM 2)</scope>
    <source>
        <strain evidence="24">C57BL/6J</strain>
        <tissue evidence="24">Brain</tissue>
    </source>
</reference>
<reference key="5">
    <citation type="journal article" date="2003" name="J. Biol. Chem.">
        <title>Identification of targets for calcium signaling through the copine family of proteins. Characterization of a coiled-coil copine-binding motif.</title>
        <authorList>
            <person name="Tomsig J.L."/>
            <person name="Snyder S.L."/>
            <person name="Creutz C.E."/>
        </authorList>
    </citation>
    <scope>INTERACTION WITH CPNE1 AND CPNE4</scope>
</reference>
<reference key="6">
    <citation type="journal article" date="2007" name="Genes Dev.">
        <title>The requirement for Phr1 in CNS axon tract formation reveals the corticostriatal boundary as a choice point for cortical axons.</title>
        <authorList>
            <person name="Bloom A.J."/>
            <person name="Miller B.R."/>
            <person name="Sanes J.R."/>
            <person name="DiAntonio A."/>
        </authorList>
    </citation>
    <scope>FUNCTION</scope>
    <scope>DISRUPTION PHENOTYPE</scope>
</reference>
<reference key="7">
    <citation type="journal article" date="2007" name="Neuron">
        <title>The ubiquitin ligase Phr1 regulates axon outgrowth through modulation of microtubule dynamics.</title>
        <authorList>
            <person name="Lewcock J.W."/>
            <person name="Genoud N."/>
            <person name="Lettieri K."/>
            <person name="Pfaff S.L."/>
        </authorList>
    </citation>
    <scope>FUNCTION</scope>
    <scope>SUBCELLULAR LOCATION</scope>
    <scope>TISSUE SPECIFICITY</scope>
    <scope>DEVELOPMENTAL STAGE</scope>
    <scope>DISRUPTION PHENOTYPE</scope>
</reference>
<reference key="8">
    <citation type="journal article" date="2007" name="Mol. Cell. Proteomics">
        <title>Qualitative and quantitative analyses of protein phosphorylation in naive and stimulated mouse synaptosomal preparations.</title>
        <authorList>
            <person name="Munton R.P."/>
            <person name="Tweedie-Cullen R."/>
            <person name="Livingstone-Zatchej M."/>
            <person name="Weinandy F."/>
            <person name="Waidelich M."/>
            <person name="Longo D."/>
            <person name="Gehrig P."/>
            <person name="Potthast F."/>
            <person name="Rutishauser D."/>
            <person name="Gerrits B."/>
            <person name="Panse C."/>
            <person name="Schlapbach R."/>
            <person name="Mansuy I.M."/>
        </authorList>
    </citation>
    <scope>IDENTIFICATION BY MASS SPECTROMETRY [LARGE SCALE ANALYSIS]</scope>
    <source>
        <tissue>Brain cortex</tissue>
    </source>
</reference>
<reference key="9">
    <citation type="journal article" date="2007" name="Proc. Natl. Acad. Sci. U.S.A.">
        <title>Large-scale phosphorylation analysis of mouse liver.</title>
        <authorList>
            <person name="Villen J."/>
            <person name="Beausoleil S.A."/>
            <person name="Gerber S.A."/>
            <person name="Gygi S.P."/>
        </authorList>
    </citation>
    <scope>PHOSPHORYLATION [LARGE SCALE ANALYSIS] AT SER-3550</scope>
    <scope>IDENTIFICATION BY MASS SPECTROMETRY [LARGE SCALE ANALYSIS]</scope>
    <source>
        <tissue>Liver</tissue>
    </source>
</reference>
<reference key="10">
    <citation type="journal article" date="2009" name="Mol. Cell. Biol.">
        <title>Fbxo45 forms a novel ubiquitin ligase complex and is required for neuronal development.</title>
        <authorList>
            <person name="Saiga T."/>
            <person name="Fukuda T."/>
            <person name="Matsumoto M."/>
            <person name="Tada H."/>
            <person name="Okano H.J."/>
            <person name="Okano H."/>
            <person name="Nakayama K.I."/>
        </authorList>
    </citation>
    <scope>INTERACTION WITH FBXO45</scope>
</reference>
<reference key="11">
    <citation type="journal article" date="2009" name="Mol. Cell. Neurosci.">
        <title>Phr1 regulates retinogeniculate targeting independent of activity and ephrin-A signalling.</title>
        <authorList>
            <person name="Culican S.M."/>
            <person name="Bloom A.J."/>
            <person name="Weiner J.A."/>
            <person name="DiAntonio A."/>
        </authorList>
    </citation>
    <scope>FUNCTION</scope>
    <scope>DISRUPTION PHENOTYPE</scope>
</reference>
<reference key="12">
    <citation type="journal article" date="2010" name="Cell">
        <title>A tissue-specific atlas of mouse protein phosphorylation and expression.</title>
        <authorList>
            <person name="Huttlin E.L."/>
            <person name="Jedrychowski M.P."/>
            <person name="Elias J.E."/>
            <person name="Goswami T."/>
            <person name="Rad R."/>
            <person name="Beausoleil S.A."/>
            <person name="Villen J."/>
            <person name="Haas W."/>
            <person name="Sowa M.E."/>
            <person name="Gygi S.P."/>
        </authorList>
    </citation>
    <scope>PHOSPHORYLATION [LARGE SCALE ANALYSIS] AT SER-178; SER-181; SER-183; SER-2941; SER-2992 AND THR-3992</scope>
    <scope>IDENTIFICATION BY MASS SPECTROMETRY [LARGE SCALE ANALYSIS]</scope>
    <source>
        <tissue>Brain</tissue>
        <tissue>Brown adipose tissue</tissue>
        <tissue>Heart</tissue>
        <tissue>Kidney</tissue>
        <tissue>Liver</tissue>
        <tissue>Lung</tissue>
        <tissue>Pancreas</tissue>
        <tissue>Spleen</tissue>
        <tissue>Testis</tissue>
    </source>
</reference>
<reference key="13">
    <citation type="journal article" date="2010" name="Proc. Natl. Acad. Sci. U.S.A.">
        <title>E3 ligases Arf-bp1 and Pam mediate lithium-stimulated degradation of the circadian heme receptor Rev-erb alpha.</title>
        <authorList>
            <person name="Yin L."/>
            <person name="Joshi S."/>
            <person name="Wu N."/>
            <person name="Tong X."/>
            <person name="Lazar M.A."/>
        </authorList>
    </citation>
    <scope>FUNCTION</scope>
</reference>
<reference key="14">
    <citation type="journal article" date="2011" name="J. Biol. Chem.">
        <title>The ubiquitin ligase MYCBP2 regulates transient receptor potential vanilloid receptor 1 (TRPV1) internalization through inhibition of p38 MAPK signaling.</title>
        <authorList>
            <person name="Holland S."/>
            <person name="Coste O."/>
            <person name="Zhang D.D."/>
            <person name="Pierre S.C."/>
            <person name="Geisslinger G."/>
            <person name="Scholich K."/>
        </authorList>
    </citation>
    <scope>FUNCTION</scope>
    <scope>DISRUPTION PHENOTYPE</scope>
</reference>
<reference key="15">
    <citation type="journal article" date="2011" name="Vis. Neurosci.">
        <title>Phr1 is required for proper retinocollicular targeting of nasal-dorsal retinal ganglion cells.</title>
        <authorList>
            <person name="Vo B.Q."/>
            <person name="Bloom A.J."/>
            <person name="Culican S.M."/>
        </authorList>
    </citation>
    <scope>FUNCTION</scope>
    <scope>DISRUPTION PHENOTYPE</scope>
</reference>
<reference key="16">
    <citation type="journal article" date="2013" name="Cell Rep.">
        <title>The Phr1 ubiquitin ligase promotes injury-induced axon self-destruction.</title>
        <authorList>
            <person name="Babetto E."/>
            <person name="Beirowski B."/>
            <person name="Russler E.V."/>
            <person name="Milbrandt J."/>
            <person name="DiAntonio A."/>
        </authorList>
    </citation>
    <scope>FUNCTION</scope>
    <scope>DISRUPTION PHENOTYPE</scope>
</reference>
<reference key="17">
    <citation type="journal article" date="2014" name="Brain Struct. Funct.">
        <title>The E3 ubiquitin ligase Mycbp2 genetically interacts with Robo2 to modulate axon guidance in the mouse olfactory system.</title>
        <authorList>
            <person name="James G."/>
            <person name="Key B."/>
            <person name="Beverdam A."/>
        </authorList>
    </citation>
    <scope>FUNCTION</scope>
</reference>
<reference key="18">
    <citation type="journal article" date="2015" name="J. Biol. Chem.">
        <title>MYCBP2 is a guanosine exchange factor for Ran protein and determines its localization in neurons of dorsal root ganglia.</title>
        <authorList>
            <person name="Doerr A."/>
            <person name="Pierre S."/>
            <person name="Zhang D.D."/>
            <person name="Henke M."/>
            <person name="Holland S."/>
            <person name="Scholich K."/>
        </authorList>
    </citation>
    <scope>FUNCTION</scope>
    <scope>SUBCELLULAR LOCATION</scope>
    <scope>INTERACTION WITH RAN AND RANGAP1</scope>
    <scope>MUTAGENESIS OF 950-HIS-HIS-951</scope>
</reference>
<reference key="19">
    <citation type="journal article" date="2010" name="J. Mol. Biol.">
        <title>Structures of PHR domains from Mus musculus Phr1 (Mycbp2) explain the loss-of-function mutation (Gly1092--&gt;Glu) of the C. elegans ortholog RPM-1.</title>
        <authorList>
            <person name="Sampathkumar P."/>
            <person name="Ozyurt S.A."/>
            <person name="Miller S.A."/>
            <person name="Bain K.T."/>
            <person name="Rutter M.E."/>
            <person name="Gheyi T."/>
            <person name="Abrams B."/>
            <person name="Wang Y."/>
            <person name="Atwell S."/>
            <person name="Luz J.G."/>
            <person name="Thompson D.A."/>
            <person name="Wasserman S.R."/>
            <person name="Emtage J.S."/>
            <person name="Park E.C."/>
            <person name="Rongo C."/>
            <person name="Jin Y."/>
            <person name="Klemke R.L."/>
            <person name="Sauder J.M."/>
            <person name="Burley S.K."/>
        </authorList>
    </citation>
    <scope>X-RAY CRYSTALLOGRAPHY (1.32 ANGSTROMS) OF 1229-1390</scope>
    <scope>X-RAY CRYSTALLOGRAPHY (2.25 ANGSTROMS) OF 1723-1883</scope>
    <scope>DOMAIN PHR</scope>
    <scope>DISULFIDE BOND</scope>
</reference>
<accession>Q7TPH6</accession>
<accession>E9PUJ6</accession>
<accession>Q6PCM8</accession>
<feature type="chain" id="PRO_0000055964" description="E3 ubiquitin-protein ligase MYCBP2">
    <location>
        <begin position="1"/>
        <end position="4749"/>
    </location>
</feature>
<feature type="repeat" description="RCC1 1" evidence="2">
    <location>
        <begin position="600"/>
        <end position="655"/>
    </location>
</feature>
<feature type="repeat" description="RCC1 2" evidence="2">
    <location>
        <begin position="699"/>
        <end position="755"/>
    </location>
</feature>
<feature type="repeat" description="RCC1 3" evidence="2">
    <location>
        <begin position="907"/>
        <end position="957"/>
    </location>
</feature>
<feature type="repeat" description="RCC1 4" evidence="2">
    <location>
        <begin position="958"/>
        <end position="1009"/>
    </location>
</feature>
<feature type="repeat" description="RCC1 5" evidence="2">
    <location>
        <begin position="1011"/>
        <end position="1066"/>
    </location>
</feature>
<feature type="repeat" description="Filamin" evidence="2">
    <location>
        <begin position="2331"/>
        <end position="2438"/>
    </location>
</feature>
<feature type="domain" description="DOC" evidence="4">
    <location>
        <begin position="3789"/>
        <end position="3967"/>
    </location>
</feature>
<feature type="zinc finger region" description="RING-type; atypical" evidence="3">
    <location>
        <begin position="4499"/>
        <end position="4550"/>
    </location>
</feature>
<feature type="region of interest" description="Disordered" evidence="5">
    <location>
        <begin position="87"/>
        <end position="127"/>
    </location>
</feature>
<feature type="region of interest" description="Disordered" evidence="5">
    <location>
        <begin position="170"/>
        <end position="192"/>
    </location>
</feature>
<feature type="region of interest" description="Disordered" evidence="5">
    <location>
        <begin position="609"/>
        <end position="628"/>
    </location>
</feature>
<feature type="region of interest" description="Disordered" evidence="5">
    <location>
        <begin position="899"/>
        <end position="928"/>
    </location>
</feature>
<feature type="region of interest" description="PHR domain 1">
    <location>
        <begin position="1235"/>
        <end position="1386"/>
    </location>
</feature>
<feature type="region of interest" description="PHR domain 2">
    <location>
        <begin position="1723"/>
        <end position="1881"/>
    </location>
</feature>
<feature type="region of interest" description="RAE1 binding" evidence="1">
    <location>
        <begin position="2018"/>
        <end position="2544"/>
    </location>
</feature>
<feature type="region of interest" description="Disordered" evidence="5">
    <location>
        <begin position="2313"/>
        <end position="2336"/>
    </location>
</feature>
<feature type="region of interest" description="Disordered" evidence="5">
    <location>
        <begin position="2780"/>
        <end position="3084"/>
    </location>
</feature>
<feature type="region of interest" description="Disordered" evidence="5">
    <location>
        <begin position="3677"/>
        <end position="3700"/>
    </location>
</feature>
<feature type="region of interest" description="Disordered" evidence="5">
    <location>
        <begin position="3986"/>
        <end position="4007"/>
    </location>
</feature>
<feature type="region of interest" description="Tandem cysteine domain" evidence="1">
    <location>
        <begin position="4610"/>
        <end position="4747"/>
    </location>
</feature>
<feature type="compositionally biased region" description="Basic residues" evidence="5">
    <location>
        <begin position="100"/>
        <end position="124"/>
    </location>
</feature>
<feature type="compositionally biased region" description="Basic residues" evidence="5">
    <location>
        <begin position="899"/>
        <end position="910"/>
    </location>
</feature>
<feature type="compositionally biased region" description="Basic and acidic residues" evidence="5">
    <location>
        <begin position="911"/>
        <end position="924"/>
    </location>
</feature>
<feature type="compositionally biased region" description="Polar residues" evidence="5">
    <location>
        <begin position="2780"/>
        <end position="2803"/>
    </location>
</feature>
<feature type="compositionally biased region" description="Basic and acidic residues" evidence="5">
    <location>
        <begin position="2814"/>
        <end position="2832"/>
    </location>
</feature>
<feature type="compositionally biased region" description="Basic and acidic residues" evidence="5">
    <location>
        <begin position="2847"/>
        <end position="2857"/>
    </location>
</feature>
<feature type="compositionally biased region" description="Polar residues" evidence="5">
    <location>
        <begin position="2858"/>
        <end position="2879"/>
    </location>
</feature>
<feature type="compositionally biased region" description="Low complexity" evidence="5">
    <location>
        <begin position="2884"/>
        <end position="2894"/>
    </location>
</feature>
<feature type="compositionally biased region" description="Low complexity" evidence="5">
    <location>
        <begin position="2904"/>
        <end position="2917"/>
    </location>
</feature>
<feature type="compositionally biased region" description="Polar residues" evidence="5">
    <location>
        <begin position="2918"/>
        <end position="2929"/>
    </location>
</feature>
<feature type="compositionally biased region" description="Basic and acidic residues" evidence="5">
    <location>
        <begin position="2932"/>
        <end position="2943"/>
    </location>
</feature>
<feature type="compositionally biased region" description="Polar residues" evidence="5">
    <location>
        <begin position="3008"/>
        <end position="3021"/>
    </location>
</feature>
<feature type="compositionally biased region" description="Basic and acidic residues" evidence="5">
    <location>
        <begin position="3027"/>
        <end position="3037"/>
    </location>
</feature>
<feature type="compositionally biased region" description="Basic and acidic residues" evidence="5">
    <location>
        <begin position="3047"/>
        <end position="3056"/>
    </location>
</feature>
<feature type="compositionally biased region" description="Basic residues" evidence="5">
    <location>
        <begin position="3060"/>
        <end position="3073"/>
    </location>
</feature>
<feature type="compositionally biased region" description="Basic and acidic residues" evidence="5">
    <location>
        <begin position="3687"/>
        <end position="3700"/>
    </location>
</feature>
<feature type="active site" evidence="1">
    <location>
        <position position="4629"/>
    </location>
</feature>
<feature type="active site" evidence="1">
    <location>
        <position position="4681"/>
    </location>
</feature>
<feature type="binding site" evidence="1">
    <location>
        <position position="4499"/>
    </location>
    <ligand>
        <name>Zn(2+)</name>
        <dbReference type="ChEBI" id="CHEBI:29105"/>
        <label>1</label>
    </ligand>
</feature>
<feature type="binding site" evidence="1">
    <location>
        <position position="4502"/>
    </location>
    <ligand>
        <name>Zn(2+)</name>
        <dbReference type="ChEBI" id="CHEBI:29105"/>
        <label>1</label>
    </ligand>
</feature>
<feature type="binding site" evidence="1">
    <location>
        <position position="4517"/>
    </location>
    <ligand>
        <name>Zn(2+)</name>
        <dbReference type="ChEBI" id="CHEBI:29105"/>
        <label>2</label>
    </ligand>
</feature>
<feature type="binding site" evidence="1">
    <location>
        <position position="4519"/>
    </location>
    <ligand>
        <name>Zn(2+)</name>
        <dbReference type="ChEBI" id="CHEBI:29105"/>
        <label>2</label>
    </ligand>
</feature>
<feature type="binding site" evidence="1">
    <location>
        <position position="4522"/>
    </location>
    <ligand>
        <name>Zn(2+)</name>
        <dbReference type="ChEBI" id="CHEBI:29105"/>
        <label>1</label>
    </ligand>
</feature>
<feature type="binding site" evidence="1">
    <location>
        <position position="4525"/>
    </location>
    <ligand>
        <name>Zn(2+)</name>
        <dbReference type="ChEBI" id="CHEBI:29105"/>
        <label>1</label>
    </ligand>
</feature>
<feature type="binding site" evidence="1">
    <location>
        <position position="4546"/>
    </location>
    <ligand>
        <name>Zn(2+)</name>
        <dbReference type="ChEBI" id="CHEBI:29105"/>
        <label>2</label>
    </ligand>
</feature>
<feature type="binding site" evidence="1">
    <location>
        <position position="4549"/>
    </location>
    <ligand>
        <name>Zn(2+)</name>
        <dbReference type="ChEBI" id="CHEBI:29105"/>
        <label>2</label>
    </ligand>
</feature>
<feature type="binding site" evidence="1">
    <location>
        <position position="4615"/>
    </location>
    <ligand>
        <name>Zn(2+)</name>
        <dbReference type="ChEBI" id="CHEBI:29105"/>
        <label>3</label>
    </ligand>
</feature>
<feature type="binding site" evidence="1">
    <location>
        <position position="4618"/>
    </location>
    <ligand>
        <name>Zn(2+)</name>
        <dbReference type="ChEBI" id="CHEBI:29105"/>
        <label>3</label>
    </ligand>
</feature>
<feature type="binding site" evidence="1">
    <location>
        <position position="4646"/>
    </location>
    <ligand>
        <name>Zn(2+)</name>
        <dbReference type="ChEBI" id="CHEBI:29105"/>
        <label>3</label>
    </ligand>
</feature>
<feature type="binding site" evidence="1">
    <location>
        <position position="4649"/>
    </location>
    <ligand>
        <name>Zn(2+)</name>
        <dbReference type="ChEBI" id="CHEBI:29105"/>
        <label>3</label>
    </ligand>
</feature>
<feature type="binding site" evidence="1">
    <location>
        <position position="4658"/>
    </location>
    <ligand>
        <name>Zn(2+)</name>
        <dbReference type="ChEBI" id="CHEBI:29105"/>
        <label>4</label>
    </ligand>
</feature>
<feature type="binding site" evidence="1">
    <location>
        <position position="4661"/>
    </location>
    <ligand>
        <name>Zn(2+)</name>
        <dbReference type="ChEBI" id="CHEBI:29105"/>
        <label>4</label>
    </ligand>
</feature>
<feature type="binding site" evidence="1">
    <location>
        <position position="4670"/>
    </location>
    <ligand>
        <name>Zn(2+)</name>
        <dbReference type="ChEBI" id="CHEBI:29105"/>
        <label>5</label>
    </ligand>
</feature>
<feature type="binding site" evidence="1">
    <location>
        <position position="4673"/>
    </location>
    <ligand>
        <name>Zn(2+)</name>
        <dbReference type="ChEBI" id="CHEBI:29105"/>
        <label>5</label>
    </ligand>
</feature>
<feature type="binding site" evidence="1">
    <location>
        <position position="4674"/>
    </location>
    <ligand>
        <name>Zn(2+)</name>
        <dbReference type="ChEBI" id="CHEBI:29105"/>
        <label>6</label>
    </ligand>
</feature>
<feature type="binding site" evidence="1">
    <location>
        <position position="4688"/>
    </location>
    <ligand>
        <name>Zn(2+)</name>
        <dbReference type="ChEBI" id="CHEBI:29105"/>
        <label>5</label>
    </ligand>
</feature>
<feature type="binding site" evidence="1">
    <location>
        <position position="4691"/>
    </location>
    <ligand>
        <name>Zn(2+)</name>
        <dbReference type="ChEBI" id="CHEBI:29105"/>
        <label>5</label>
    </ligand>
</feature>
<feature type="binding site" evidence="1">
    <location>
        <position position="4709"/>
    </location>
    <ligand>
        <name>Zn(2+)</name>
        <dbReference type="ChEBI" id="CHEBI:29105"/>
        <label>6</label>
    </ligand>
</feature>
<feature type="binding site" evidence="1">
    <location>
        <position position="4723"/>
    </location>
    <ligand>
        <name>Zn(2+)</name>
        <dbReference type="ChEBI" id="CHEBI:29105"/>
        <label>6</label>
    </ligand>
</feature>
<feature type="binding site" evidence="1">
    <location>
        <position position="4729"/>
    </location>
    <ligand>
        <name>Zn(2+)</name>
        <dbReference type="ChEBI" id="CHEBI:29105"/>
        <label>6</label>
    </ligand>
</feature>
<feature type="binding site" evidence="1">
    <location>
        <position position="4740"/>
    </location>
    <ligand>
        <name>Zn(2+)</name>
        <dbReference type="ChEBI" id="CHEBI:29105"/>
        <label>4</label>
    </ligand>
</feature>
<feature type="binding site" evidence="1">
    <location>
        <position position="4743"/>
    </location>
    <ligand>
        <name>Zn(2+)</name>
        <dbReference type="ChEBI" id="CHEBI:29105"/>
        <label>4</label>
    </ligand>
</feature>
<feature type="site" description="Important for catalysis" evidence="1">
    <location>
        <position position="4682"/>
    </location>
</feature>
<feature type="site" description="Important for catalysis" evidence="1">
    <location>
        <position position="4687"/>
    </location>
</feature>
<feature type="site" description="Important for catalysis" evidence="1">
    <location>
        <position position="4695"/>
    </location>
</feature>
<feature type="modified residue" description="Phosphoserine" evidence="1">
    <location>
        <position position="127"/>
    </location>
</feature>
<feature type="modified residue" description="Phosphoserine" evidence="28">
    <location>
        <position position="178"/>
    </location>
</feature>
<feature type="modified residue" description="Phosphoserine" evidence="28">
    <location>
        <position position="181"/>
    </location>
</feature>
<feature type="modified residue" description="Phosphoserine" evidence="28">
    <location>
        <position position="183"/>
    </location>
</feature>
<feature type="modified residue" description="Phosphoserine" evidence="1">
    <location>
        <position position="1621"/>
    </location>
</feature>
<feature type="modified residue" description="Phosphoserine" evidence="1">
    <location>
        <position position="2841"/>
    </location>
</feature>
<feature type="modified residue" description="Phosphoserine" evidence="1">
    <location>
        <position position="2859"/>
    </location>
</feature>
<feature type="modified residue" description="Phosphoserine" evidence="1">
    <location>
        <position position="2861"/>
    </location>
</feature>
<feature type="modified residue" description="Phosphoserine" evidence="1">
    <location>
        <position position="2905"/>
    </location>
</feature>
<feature type="modified residue" description="Phosphoserine" evidence="1">
    <location>
        <position position="2911"/>
    </location>
</feature>
<feature type="modified residue" description="Phosphoserine" evidence="28">
    <location>
        <position position="2941"/>
    </location>
</feature>
<feature type="modified residue" description="Phosphoserine" evidence="1">
    <location>
        <position position="2943"/>
    </location>
</feature>
<feature type="modified residue" description="Phosphoserine" evidence="28">
    <location>
        <position position="2992"/>
    </location>
</feature>
<feature type="modified residue" description="Phosphoserine" evidence="1">
    <location>
        <position position="3057"/>
    </location>
</feature>
<feature type="modified residue" description="Phosphoserine" evidence="1">
    <location>
        <position position="3162"/>
    </location>
</feature>
<feature type="modified residue" description="Phosphoserine" evidence="27">
    <location>
        <position position="3550"/>
    </location>
</feature>
<feature type="modified residue" description="Phosphoserine" evidence="1">
    <location>
        <position position="3577"/>
    </location>
</feature>
<feature type="modified residue" description="Phosphothreonine" evidence="28">
    <location>
        <position position="3992"/>
    </location>
</feature>
<feature type="modified residue" description="Phosphoserine" evidence="1">
    <location>
        <position position="4002"/>
    </location>
</feature>
<feature type="modified residue" description="Phosphoserine" evidence="1">
    <location>
        <position position="4003"/>
    </location>
</feature>
<feature type="disulfide bond" evidence="23">
    <location>
        <begin position="1745"/>
        <end position="1860"/>
    </location>
</feature>
<feature type="splice variant" id="VSP_014184" description="In isoform 2." evidence="20">
    <location>
        <begin position="4010"/>
        <end position="4012"/>
    </location>
</feature>
<feature type="mutagenesis site" description="Abolished guanosine exchange factor (GEF) activity for Ran." evidence="18">
    <original>HH</original>
    <variation>AA</variation>
    <location>
        <begin position="950"/>
        <end position="951"/>
    </location>
</feature>
<feature type="sequence conflict" description="In Ref. 2; AAP88591." ref="2">
    <original>E</original>
    <variation>K</variation>
    <location>
        <position position="860"/>
    </location>
</feature>
<feature type="sequence conflict" description="In Ref. 2; AAP88591." ref="2">
    <original>G</original>
    <variation>C</variation>
    <location>
        <position position="999"/>
    </location>
</feature>
<feature type="sequence conflict" description="In Ref. 2; AAP88591." ref="2">
    <original>R</original>
    <variation>S</variation>
    <location>
        <position position="1831"/>
    </location>
</feature>
<feature type="sequence conflict" description="In Ref. 2; AAP88591." ref="2">
    <original>P</original>
    <variation>S</variation>
    <location>
        <position position="1987"/>
    </location>
</feature>
<feature type="sequence conflict" description="In Ref. 2; AAP88591." ref="2">
    <original>E</original>
    <variation>G</variation>
    <location>
        <position position="3685"/>
    </location>
</feature>
<feature type="sequence conflict" description="In Ref. 2; AAP88591." ref="2">
    <original>G</original>
    <variation>E</variation>
    <location>
        <position position="4636"/>
    </location>
</feature>
<feature type="strand" evidence="29">
    <location>
        <begin position="1232"/>
        <end position="1235"/>
    </location>
</feature>
<feature type="strand" evidence="29">
    <location>
        <begin position="1237"/>
        <end position="1240"/>
    </location>
</feature>
<feature type="strand" evidence="29">
    <location>
        <begin position="1252"/>
        <end position="1260"/>
    </location>
</feature>
<feature type="strand" evidence="29">
    <location>
        <begin position="1262"/>
        <end position="1270"/>
    </location>
</feature>
<feature type="strand" evidence="29">
    <location>
        <begin position="1276"/>
        <end position="1286"/>
    </location>
</feature>
<feature type="turn" evidence="29">
    <location>
        <begin position="1287"/>
        <end position="1291"/>
    </location>
</feature>
<feature type="strand" evidence="29">
    <location>
        <begin position="1297"/>
        <end position="1301"/>
    </location>
</feature>
<feature type="strand" evidence="29">
    <location>
        <begin position="1305"/>
        <end position="1307"/>
    </location>
</feature>
<feature type="strand" evidence="29">
    <location>
        <begin position="1314"/>
        <end position="1325"/>
    </location>
</feature>
<feature type="strand" evidence="29">
    <location>
        <begin position="1330"/>
        <end position="1340"/>
    </location>
</feature>
<feature type="strand" evidence="29">
    <location>
        <begin position="1345"/>
        <end position="1348"/>
    </location>
</feature>
<feature type="strand" evidence="29">
    <location>
        <begin position="1350"/>
        <end position="1353"/>
    </location>
</feature>
<feature type="strand" evidence="29">
    <location>
        <begin position="1359"/>
        <end position="1364"/>
    </location>
</feature>
<feature type="strand" evidence="29">
    <location>
        <begin position="1373"/>
        <end position="1378"/>
    </location>
</feature>
<feature type="strand" evidence="29">
    <location>
        <begin position="1381"/>
        <end position="1385"/>
    </location>
</feature>
<feature type="strand" evidence="30">
    <location>
        <begin position="1724"/>
        <end position="1728"/>
    </location>
</feature>
<feature type="strand" evidence="30">
    <location>
        <begin position="1730"/>
        <end position="1732"/>
    </location>
</feature>
<feature type="helix" evidence="30">
    <location>
        <begin position="1737"/>
        <end position="1739"/>
    </location>
</feature>
<feature type="strand" evidence="30">
    <location>
        <begin position="1742"/>
        <end position="1751"/>
    </location>
</feature>
<feature type="strand" evidence="30">
    <location>
        <begin position="1753"/>
        <end position="1761"/>
    </location>
</feature>
<feature type="strand" evidence="30">
    <location>
        <begin position="1767"/>
        <end position="1775"/>
    </location>
</feature>
<feature type="strand" evidence="30">
    <location>
        <begin position="1791"/>
        <end position="1800"/>
    </location>
</feature>
<feature type="strand" evidence="30">
    <location>
        <begin position="1808"/>
        <end position="1819"/>
    </location>
</feature>
<feature type="strand" evidence="30">
    <location>
        <begin position="1826"/>
        <end position="1835"/>
    </location>
</feature>
<feature type="strand" evidence="30">
    <location>
        <begin position="1840"/>
        <end position="1843"/>
    </location>
</feature>
<feature type="strand" evidence="30">
    <location>
        <begin position="1845"/>
        <end position="1848"/>
    </location>
</feature>
<feature type="strand" evidence="30">
    <location>
        <begin position="1854"/>
        <end position="1858"/>
    </location>
</feature>
<feature type="strand" evidence="30">
    <location>
        <begin position="1869"/>
        <end position="1873"/>
    </location>
</feature>
<feature type="strand" evidence="30">
    <location>
        <begin position="1876"/>
        <end position="1881"/>
    </location>
</feature>
<organism>
    <name type="scientific">Mus musculus</name>
    <name type="common">Mouse</name>
    <dbReference type="NCBI Taxonomy" id="10090"/>
    <lineage>
        <taxon>Eukaryota</taxon>
        <taxon>Metazoa</taxon>
        <taxon>Chordata</taxon>
        <taxon>Craniata</taxon>
        <taxon>Vertebrata</taxon>
        <taxon>Euteleostomi</taxon>
        <taxon>Mammalia</taxon>
        <taxon>Eutheria</taxon>
        <taxon>Euarchontoglires</taxon>
        <taxon>Glires</taxon>
        <taxon>Rodentia</taxon>
        <taxon>Myomorpha</taxon>
        <taxon>Muroidea</taxon>
        <taxon>Muridae</taxon>
        <taxon>Murinae</taxon>
        <taxon>Mus</taxon>
        <taxon>Mus</taxon>
    </lineage>
</organism>
<comment type="function">
    <text evidence="1 7 8 9 10 13 14 15 16 17 18">Atypical E3 ubiquitin-protein ligase which specifically mediates ubiquitination of threonine and serine residues on target proteins, instead of ubiquitinating lysine residues (By similarity). Shows esterification activity towards both threonine and serine, with a preference for threonine, and acts via two essential catalytic cysteine residues that relay ubiquitin to its substrate via thioester intermediates (By similarity). Interacts with the E2 enzymes UBE2D1, UBE2D3, UBE2E1 and UBE2L3 (By similarity). Plays a key role in neural development, probably by mediating ubiquitination of threonine residues on target proteins (By similarity). Involved in different processes such as regulation of neurite outgrowth, synaptic growth, synaptogenesis and axon degeneration (PubMed:14729956, PubMed:17901218, PubMed:18031680). Required for the formation of major central nervous system axon tracts (PubMed:17901218, PubMed:18031680). Required for proper axon growth by regulating axon navigation and axon branching: acts by regulating the subcellular location and stability of MAP3K12/DLK (PubMed:18031680). Required for proper localization of retinogeniculate projections but not for eye-specific segregation (PubMed:19371781, PubMed:21324225). Regulates axon guidance in the olfactory system (PubMed:23525682). Involved in Wallerian axon degeneration, an evolutionarily conserved process that drives the loss of damaged axons: acts by promoting destabilization of NMNAT2, probably via ubiquitination of NMNAT2 (PubMed:23665224). Catalyzes ubiquitination of threonine and/or serine residues on NMNAT2, consequences of threonine and/or serine ubiquitination are however unknown (By similarity). Regulates the internalization of TRPV1 in peripheral sensory neurons (PubMed:21098484). May mediate ubiquitination and subsequent proteasomal degradation of TSC2/tuberin (By similarity). Independently of the E3 ubiquitin-protein ligase activity, also acts as a guanosine exchange factor (GEF) for RAN in neurons of dorsal root ganglia (PubMed:26304119). May function as a facilitator or regulator of transcriptional activation by MYC (By similarity). Acts in concert with HUWE1 to regulate the circadian clock gene expression by promoting the lithium-induced ubiquination and degradation of NR1D1 (PubMed:20534529).</text>
</comment>
<comment type="catalytic activity">
    <reaction evidence="1">
        <text>[E2 ubiquitin-conjugating enzyme]-S-ubiquitinyl-L-cysteine + [acceptor protein]-L-threonine = [E2 ubiquitin-conjugating enzyme]-L-cysteine + [acceptor protein]-3-O-ubiquitinyl-L-threonine.</text>
        <dbReference type="EC" id="2.3.2.33"/>
    </reaction>
</comment>
<comment type="pathway">
    <text evidence="1">Protein modification; protein ubiquitination.</text>
</comment>
<comment type="subunit">
    <text evidence="1 6 11 18">Interacts with MYC (By similarity). Interacts with TSC2 (tuberin) when TSC2 is in complex with TSC1 (hamartin) (By similarity). Interacts with FBXO45 (PubMed:19398581). Interacts with RAE1 (By similarity). Interacts with CPNE1 (via VWFA domain) and CPNE4 (via VWFA domain) (PubMed:12522145). Interacts with (sumoylated) RANGAP1; interaction with sumoylated RANGAP1 inhibits E3 ubiquitin-protein ligase activity and promotes MYCBP2 translocation to the nucleus (PubMed:26304119). Interacts with RAN (PubMed:26304119). Interacts with ATP13A2; the interaction inhibits the ubiquitination of TSC2 by MYCBP2 (By similarity). Interacts with USP11 (By similarity).</text>
</comment>
<comment type="interaction">
    <interactant intactId="EBI-1811542">
        <id>Q7TPH6</id>
    </interactant>
    <interactant intactId="EBI-1811510">
        <id>Q63633</id>
        <label>Slc12a5</label>
    </interactant>
    <organismsDiffer>true</organismsDiffer>
    <experiments>4</experiments>
</comment>
<comment type="subcellular location">
    <subcellularLocation>
        <location evidence="18">Nucleus</location>
    </subcellularLocation>
    <subcellularLocation>
        <location evidence="9">Cell projection</location>
        <location evidence="9">Axon</location>
    </subcellularLocation>
    <subcellularLocation>
        <location evidence="9">Cytoplasm</location>
        <location evidence="9">Cytoskeleton</location>
    </subcellularLocation>
    <text evidence="9 18">Localizes to axon shafts and associates with microtubule cytoskeleton (PubMed:18031680). Translocates to the nucleus following interaction with sumoylated RANGAP1 (PubMed:26304119).</text>
</comment>
<comment type="alternative products">
    <event type="alternative splicing"/>
    <isoform>
        <id>Q7TPH6-1</id>
        <name evidence="19">1</name>
        <sequence type="displayed"/>
    </isoform>
    <isoform>
        <id>Q7TPH6-2</id>
        <name evidence="22">2</name>
        <sequence type="described" ref="VSP_014184"/>
    </isoform>
</comment>
<comment type="tissue specificity">
    <text evidence="7 9">Expression is mostly restricted to the nervous system, including expression in motor and sensory axons (PubMed:18031680). During postnatal development, expression is particularly strong in the cerebellum, hippocampus and retina (PubMed:14729956). Lower levels of expression are observed throughout the cerebral cortex (PubMed:14729956).</text>
</comment>
<comment type="developmental stage">
    <text evidence="7 9">Dynamically expressed in embryonic nervous system from 8.5 dpc through 18.5 dpc (PubMed:14729956, PubMed:18031680). At 10.5 dpc, shortly after the birth of the first motor neurons, highly expressed in the developing motor columns, dorsal root ganglion and newly formed neurons within the dorsal neural tube (PubMed:18031680). As embryos develop to 11.5 dpc, expression levels increase in the dorsal root ganglion and expression in the spinal cord expandes as the number of postmitotic neurons increase (PubMed:18031680). By 12.5 dpc expression is widespread within the spinal cord (PubMed:18031680).</text>
</comment>
<comment type="domain">
    <text evidence="12">The PHR domains are compact beta-sandwich folds composed of 11 antiparallel strands and decorated with conserved apical loops. They are likely to play a structural role and mediate interactions with substrates or partners.</text>
</comment>
<comment type="domain">
    <text evidence="1">The tandem cysteine domain region confers threonine specificity and contains the two essential catalytic cysteine residues that relay ubiquitin. It binds four zinc ions in a C5HC7HC2 configuration.</text>
</comment>
<comment type="PTM">
    <text evidence="1">Autoubiquitinated.</text>
</comment>
<comment type="disruption phenotype">
    <text evidence="7 8 9 10 14 15">Lethality caused by defects in neuromuscular development (PubMed:17901218). Mice die at birth without taking a breath: phrenic nerves are markedly narrower and contain fewer axons than controls (PubMed:17901218). Mice display incomplete innervation of the diaphragm by the phrenic nerve (PubMed:14729956, PubMed:17901218). Intercostal muscles are completely innervated, but show dysmorphic nerve terminals (PubMed:14729956, PubMed:17901218). Sensory neuron terminals in the diaphragm are abnormal and neuromuscular junctions show excessive sprouting of nerve terminals, consistent with inadequate presynaptic stimulation of the muscle (PubMed:14729956). Embryos display motor axon misprojections and stalling: motor axons are error-prone and wander inefficiently at choice points within embryos (PubMed:18031680). Conditional knockout mice lacking Mycbp2 in the retina, exhibit no gross retinal developmental defects; mutants retain normal retinal lamination, monocular segregation and spontaneous retinal wave activity, but mutant retinal ganglion cells exhibit ipsilateral projection to an improper region of the dorsal lateral geniculate nucleus (dLGN) (PubMed:19371781, PubMed:21324225). Conditional knockout mice lacking Mycbp2 in peripheral sensory neurons display prolonged thermal hyperalgesia: defects are caused by constitutive activation of MAP kinase p38 (Mapk11, Mapk12, Mapk13 and/or Mapk14), leading to inhibit internalization of Trpv1 (PubMed:21098484).</text>
</comment>
<comment type="similarity">
    <text evidence="22">Belongs to the RING-Cys relay (RCR) family.</text>
</comment>
<name>MYCB2_MOUSE</name>
<protein>
    <recommendedName>
        <fullName evidence="22">E3 ubiquitin-protein ligase MYCBP2</fullName>
        <ecNumber evidence="1">2.3.2.33</ecNumber>
    </recommendedName>
    <alternativeName>
        <fullName evidence="22">Myc-binding protein 2</fullName>
    </alternativeName>
    <alternativeName>
        <fullName evidence="19">Pam/highwire/rpm-1 protein</fullName>
    </alternativeName>
    <alternativeName>
        <fullName evidence="21">Protein Magellan</fullName>
    </alternativeName>
    <alternativeName>
        <fullName evidence="19">Protein associated with Myc</fullName>
    </alternativeName>
</protein>
<gene>
    <name evidence="26" type="primary">Mycbp2</name>
    <name evidence="19" type="synonym">Pam</name>
    <name evidence="19" type="synonym">Phr1</name>
</gene>
<evidence type="ECO:0000250" key="1">
    <source>
        <dbReference type="UniProtKB" id="O75592"/>
    </source>
</evidence>
<evidence type="ECO:0000255" key="2"/>
<evidence type="ECO:0000255" key="3">
    <source>
        <dbReference type="PROSITE-ProRule" id="PRU00175"/>
    </source>
</evidence>
<evidence type="ECO:0000255" key="4">
    <source>
        <dbReference type="PROSITE-ProRule" id="PRU00614"/>
    </source>
</evidence>
<evidence type="ECO:0000256" key="5">
    <source>
        <dbReference type="SAM" id="MobiDB-lite"/>
    </source>
</evidence>
<evidence type="ECO:0000269" key="6">
    <source>
    </source>
</evidence>
<evidence type="ECO:0000269" key="7">
    <source>
    </source>
</evidence>
<evidence type="ECO:0000269" key="8">
    <source>
    </source>
</evidence>
<evidence type="ECO:0000269" key="9">
    <source>
    </source>
</evidence>
<evidence type="ECO:0000269" key="10">
    <source>
    </source>
</evidence>
<evidence type="ECO:0000269" key="11">
    <source>
    </source>
</evidence>
<evidence type="ECO:0000269" key="12">
    <source>
    </source>
</evidence>
<evidence type="ECO:0000269" key="13">
    <source>
    </source>
</evidence>
<evidence type="ECO:0000269" key="14">
    <source>
    </source>
</evidence>
<evidence type="ECO:0000269" key="15">
    <source>
    </source>
</evidence>
<evidence type="ECO:0000269" key="16">
    <source>
    </source>
</evidence>
<evidence type="ECO:0000269" key="17">
    <source>
    </source>
</evidence>
<evidence type="ECO:0000269" key="18">
    <source>
    </source>
</evidence>
<evidence type="ECO:0000303" key="19">
    <source>
    </source>
</evidence>
<evidence type="ECO:0000303" key="20">
    <source>
    </source>
</evidence>
<evidence type="ECO:0000303" key="21">
    <source>
    </source>
</evidence>
<evidence type="ECO:0000305" key="22"/>
<evidence type="ECO:0000305" key="23">
    <source>
    </source>
</evidence>
<evidence type="ECO:0000312" key="24">
    <source>
        <dbReference type="EMBL" id="AAH59257.1"/>
    </source>
</evidence>
<evidence type="ECO:0000312" key="25">
    <source>
        <dbReference type="EMBL" id="AAP88591.1"/>
    </source>
</evidence>
<evidence type="ECO:0000312" key="26">
    <source>
        <dbReference type="MGI" id="MGI:2179432"/>
    </source>
</evidence>
<evidence type="ECO:0007744" key="27">
    <source>
    </source>
</evidence>
<evidence type="ECO:0007744" key="28">
    <source>
    </source>
</evidence>
<evidence type="ECO:0007829" key="29">
    <source>
        <dbReference type="PDB" id="3GBW"/>
    </source>
</evidence>
<evidence type="ECO:0007829" key="30">
    <source>
        <dbReference type="PDB" id="3HWJ"/>
    </source>
</evidence>